<gene>
    <name evidence="1" type="primary">yjhX1</name>
    <name type="ordered locus">STY4648</name>
    <name type="ordered locus">t4341</name>
</gene>
<protein>
    <recommendedName>
        <fullName evidence="1">UPF0386 protein YjhX 1</fullName>
    </recommendedName>
</protein>
<dbReference type="EMBL" id="AL513382">
    <property type="protein sequence ID" value="CAD06768.1"/>
    <property type="status" value="ALT_INIT"/>
    <property type="molecule type" value="Genomic_DNA"/>
</dbReference>
<dbReference type="EMBL" id="AE014613">
    <property type="protein sequence ID" value="AAO71794.1"/>
    <property type="status" value="ALT_INIT"/>
    <property type="molecule type" value="Genomic_DNA"/>
</dbReference>
<dbReference type="RefSeq" id="NP_458727.1">
    <property type="nucleotide sequence ID" value="NC_003198.1"/>
</dbReference>
<dbReference type="RefSeq" id="WP_001681810.1">
    <property type="nucleotide sequence ID" value="NZ_WSUR01000012.1"/>
</dbReference>
<dbReference type="STRING" id="220341.gene:17588465"/>
<dbReference type="KEGG" id="stt:t4341"/>
<dbReference type="KEGG" id="sty:STY4648"/>
<dbReference type="PATRIC" id="fig|220341.7.peg.4747"/>
<dbReference type="eggNOG" id="COG3811">
    <property type="taxonomic scope" value="Bacteria"/>
</dbReference>
<dbReference type="HOGENOM" id="CLU_164736_0_0_6"/>
<dbReference type="OMA" id="CIRIEKD"/>
<dbReference type="OrthoDB" id="7204880at2"/>
<dbReference type="Proteomes" id="UP000000541">
    <property type="component" value="Chromosome"/>
</dbReference>
<dbReference type="Proteomes" id="UP000002670">
    <property type="component" value="Chromosome"/>
</dbReference>
<dbReference type="HAMAP" id="MF_00827">
    <property type="entry name" value="UPF0386"/>
    <property type="match status" value="1"/>
</dbReference>
<dbReference type="InterPro" id="IPR018654">
    <property type="entry name" value="YjhX_toxin"/>
</dbReference>
<dbReference type="NCBIfam" id="NF010240">
    <property type="entry name" value="PRK13687.1"/>
    <property type="match status" value="1"/>
</dbReference>
<dbReference type="Pfam" id="PF09857">
    <property type="entry name" value="YjhX_toxin"/>
    <property type="match status" value="1"/>
</dbReference>
<evidence type="ECO:0000255" key="1">
    <source>
        <dbReference type="HAMAP-Rule" id="MF_00827"/>
    </source>
</evidence>
<evidence type="ECO:0000305" key="2"/>
<feature type="chain" id="PRO_0000252189" description="UPF0386 protein YjhX 1">
    <location>
        <begin position="1"/>
        <end position="85"/>
    </location>
</feature>
<name>YJHX1_SALTI</name>
<proteinExistence type="inferred from homology"/>
<accession>Q8Z1D0</accession>
<accession>Q7C5A1</accession>
<reference key="1">
    <citation type="journal article" date="2001" name="Nature">
        <title>Complete genome sequence of a multiple drug resistant Salmonella enterica serovar Typhi CT18.</title>
        <authorList>
            <person name="Parkhill J."/>
            <person name="Dougan G."/>
            <person name="James K.D."/>
            <person name="Thomson N.R."/>
            <person name="Pickard D."/>
            <person name="Wain J."/>
            <person name="Churcher C.M."/>
            <person name="Mungall K.L."/>
            <person name="Bentley S.D."/>
            <person name="Holden M.T.G."/>
            <person name="Sebaihia M."/>
            <person name="Baker S."/>
            <person name="Basham D."/>
            <person name="Brooks K."/>
            <person name="Chillingworth T."/>
            <person name="Connerton P."/>
            <person name="Cronin A."/>
            <person name="Davis P."/>
            <person name="Davies R.M."/>
            <person name="Dowd L."/>
            <person name="White N."/>
            <person name="Farrar J."/>
            <person name="Feltwell T."/>
            <person name="Hamlin N."/>
            <person name="Haque A."/>
            <person name="Hien T.T."/>
            <person name="Holroyd S."/>
            <person name="Jagels K."/>
            <person name="Krogh A."/>
            <person name="Larsen T.S."/>
            <person name="Leather S."/>
            <person name="Moule S."/>
            <person name="O'Gaora P."/>
            <person name="Parry C."/>
            <person name="Quail M.A."/>
            <person name="Rutherford K.M."/>
            <person name="Simmonds M."/>
            <person name="Skelton J."/>
            <person name="Stevens K."/>
            <person name="Whitehead S."/>
            <person name="Barrell B.G."/>
        </authorList>
    </citation>
    <scope>NUCLEOTIDE SEQUENCE [LARGE SCALE GENOMIC DNA]</scope>
    <source>
        <strain>CT18</strain>
    </source>
</reference>
<reference key="2">
    <citation type="journal article" date="2003" name="J. Bacteriol.">
        <title>Comparative genomics of Salmonella enterica serovar Typhi strains Ty2 and CT18.</title>
        <authorList>
            <person name="Deng W."/>
            <person name="Liou S.-R."/>
            <person name="Plunkett G. III"/>
            <person name="Mayhew G.F."/>
            <person name="Rose D.J."/>
            <person name="Burland V."/>
            <person name="Kodoyianni V."/>
            <person name="Schwartz D.C."/>
            <person name="Blattner F.R."/>
        </authorList>
    </citation>
    <scope>NUCLEOTIDE SEQUENCE [LARGE SCALE GENOMIC DNA]</scope>
    <source>
        <strain>ATCC 700931 / Ty2</strain>
    </source>
</reference>
<comment type="similarity">
    <text evidence="1">Belongs to the UPF0386 family.</text>
</comment>
<comment type="sequence caution" evidence="2">
    <conflict type="erroneous initiation">
        <sequence resource="EMBL-CDS" id="AAO71794"/>
    </conflict>
</comment>
<comment type="sequence caution" evidence="2">
    <conflict type="erroneous initiation">
        <sequence resource="EMBL-CDS" id="CAD06768"/>
    </conflict>
</comment>
<organism>
    <name type="scientific">Salmonella typhi</name>
    <dbReference type="NCBI Taxonomy" id="90370"/>
    <lineage>
        <taxon>Bacteria</taxon>
        <taxon>Pseudomonadati</taxon>
        <taxon>Pseudomonadota</taxon>
        <taxon>Gammaproteobacteria</taxon>
        <taxon>Enterobacterales</taxon>
        <taxon>Enterobacteriaceae</taxon>
        <taxon>Salmonella</taxon>
    </lineage>
</organism>
<sequence>MNLSRQEQRTLHVLAKGGRIVHVRDASGRVTSVECYSREGLLLADCTLAVFKKLKTKKLIKSVNGQPYRINTTGLNNVRSQPDNR</sequence>